<sequence length="224" mass="26435">MKPQDLKLPYFWEERSPQIANHVFYVPNYYSRYEEFVMPTWQELFANNGPICCELCSGNGDWVVEQALKDASVNWIAVEKRFDRVRKIWSKMGNYRVNNLLIVCGEAQTFFSHYVSDASFQKIVVNFPDPWPKFRHRKHRLFQDLFVQDMMRTLVVGGQLTLATDDYNYLVNAITVMLKYLSPGLKSPHYINVKDNYGGSWFENLWRSKGQEIFCTEFIKRVGI</sequence>
<feature type="chain" id="PRO_0000171317" description="tRNA (guanine-N(7)-)-methyltransferase">
    <location>
        <begin position="1"/>
        <end position="224"/>
    </location>
</feature>
<feature type="active site" evidence="1">
    <location>
        <position position="129"/>
    </location>
</feature>
<feature type="binding site" evidence="2">
    <location>
        <position position="54"/>
    </location>
    <ligand>
        <name>S-adenosyl-L-methionine</name>
        <dbReference type="ChEBI" id="CHEBI:59789"/>
    </ligand>
</feature>
<feature type="binding site" evidence="2">
    <location>
        <position position="79"/>
    </location>
    <ligand>
        <name>S-adenosyl-L-methionine</name>
        <dbReference type="ChEBI" id="CHEBI:59789"/>
    </ligand>
</feature>
<feature type="binding site" evidence="2">
    <location>
        <position position="106"/>
    </location>
    <ligand>
        <name>S-adenosyl-L-methionine</name>
        <dbReference type="ChEBI" id="CHEBI:59789"/>
    </ligand>
</feature>
<feature type="binding site" evidence="2">
    <location>
        <position position="129"/>
    </location>
    <ligand>
        <name>S-adenosyl-L-methionine</name>
        <dbReference type="ChEBI" id="CHEBI:59789"/>
    </ligand>
</feature>
<feature type="binding site" evidence="2">
    <location>
        <position position="133"/>
    </location>
    <ligand>
        <name>substrate</name>
    </ligand>
</feature>
<feature type="binding site" evidence="2">
    <location>
        <position position="165"/>
    </location>
    <ligand>
        <name>substrate</name>
    </ligand>
</feature>
<comment type="function">
    <text evidence="2">Catalyzes the formation of N(7)-methylguanine at position 46 (m7G46) in tRNA.</text>
</comment>
<comment type="catalytic activity">
    <reaction evidence="2">
        <text>guanosine(46) in tRNA + S-adenosyl-L-methionine = N(7)-methylguanosine(46) in tRNA + S-adenosyl-L-homocysteine</text>
        <dbReference type="Rhea" id="RHEA:42708"/>
        <dbReference type="Rhea" id="RHEA-COMP:10188"/>
        <dbReference type="Rhea" id="RHEA-COMP:10189"/>
        <dbReference type="ChEBI" id="CHEBI:57856"/>
        <dbReference type="ChEBI" id="CHEBI:59789"/>
        <dbReference type="ChEBI" id="CHEBI:74269"/>
        <dbReference type="ChEBI" id="CHEBI:74480"/>
        <dbReference type="EC" id="2.1.1.33"/>
    </reaction>
</comment>
<comment type="pathway">
    <text evidence="2">tRNA modification; N(7)-methylguanine-tRNA biosynthesis.</text>
</comment>
<comment type="similarity">
    <text evidence="2">Belongs to the class I-like SAM-binding methyltransferase superfamily. TrmB family.</text>
</comment>
<comment type="sequence caution" evidence="3">
    <conflict type="erroneous initiation">
        <sequence resource="EMBL-CDS" id="AAC68426"/>
    </conflict>
</comment>
<gene>
    <name evidence="2" type="primary">trmB</name>
    <name type="ordered locus">CT_829</name>
</gene>
<dbReference type="EC" id="2.1.1.33" evidence="2"/>
<dbReference type="EMBL" id="AE001273">
    <property type="protein sequence ID" value="AAC68426.1"/>
    <property type="status" value="ALT_INIT"/>
    <property type="molecule type" value="Genomic_DNA"/>
</dbReference>
<dbReference type="PIR" id="E71464">
    <property type="entry name" value="E71464"/>
</dbReference>
<dbReference type="RefSeq" id="WP_024125994.1">
    <property type="nucleotide sequence ID" value="NC_000117.1"/>
</dbReference>
<dbReference type="SMR" id="O84836"/>
<dbReference type="FunCoup" id="O84836">
    <property type="interactions" value="194"/>
</dbReference>
<dbReference type="STRING" id="272561.CT_829"/>
<dbReference type="EnsemblBacteria" id="AAC68426">
    <property type="protein sequence ID" value="AAC68426"/>
    <property type="gene ID" value="CT_829"/>
</dbReference>
<dbReference type="KEGG" id="ctr:CT_829"/>
<dbReference type="PATRIC" id="fig|272561.5.peg.915"/>
<dbReference type="HOGENOM" id="CLU_050910_2_0_0"/>
<dbReference type="InParanoid" id="O84836"/>
<dbReference type="OrthoDB" id="9802090at2"/>
<dbReference type="UniPathway" id="UPA00989"/>
<dbReference type="Proteomes" id="UP000000431">
    <property type="component" value="Chromosome"/>
</dbReference>
<dbReference type="GO" id="GO:0043527">
    <property type="term" value="C:tRNA methyltransferase complex"/>
    <property type="evidence" value="ECO:0000318"/>
    <property type="project" value="GO_Central"/>
</dbReference>
<dbReference type="GO" id="GO:0008176">
    <property type="term" value="F:tRNA (guanine(46)-N7)-methyltransferase activity"/>
    <property type="evidence" value="ECO:0000318"/>
    <property type="project" value="GO_Central"/>
</dbReference>
<dbReference type="GO" id="GO:0036265">
    <property type="term" value="P:RNA (guanine-N7)-methylation"/>
    <property type="evidence" value="ECO:0000318"/>
    <property type="project" value="GO_Central"/>
</dbReference>
<dbReference type="GO" id="GO:0030488">
    <property type="term" value="P:tRNA methylation"/>
    <property type="evidence" value="ECO:0000318"/>
    <property type="project" value="GO_Central"/>
</dbReference>
<dbReference type="Gene3D" id="3.40.50.150">
    <property type="entry name" value="Vaccinia Virus protein VP39"/>
    <property type="match status" value="1"/>
</dbReference>
<dbReference type="HAMAP" id="MF_01057">
    <property type="entry name" value="tRNA_methyltr_TrmB"/>
    <property type="match status" value="1"/>
</dbReference>
<dbReference type="InterPro" id="IPR029063">
    <property type="entry name" value="SAM-dependent_MTases_sf"/>
</dbReference>
<dbReference type="InterPro" id="IPR003358">
    <property type="entry name" value="tRNA_(Gua-N-7)_MeTrfase_Trmb"/>
</dbReference>
<dbReference type="InterPro" id="IPR055361">
    <property type="entry name" value="tRNA_methyltr_TrmB_bact"/>
</dbReference>
<dbReference type="PANTHER" id="PTHR23417">
    <property type="entry name" value="3-DEOXY-D-MANNO-OCTULOSONIC-ACID TRANSFERASE/TRNA GUANINE-N 7 - -METHYLTRANSFERASE"/>
    <property type="match status" value="1"/>
</dbReference>
<dbReference type="PANTHER" id="PTHR23417:SF14">
    <property type="entry name" value="PENTACOTRIPEPTIDE-REPEAT REGION OF PRORP DOMAIN-CONTAINING PROTEIN"/>
    <property type="match status" value="1"/>
</dbReference>
<dbReference type="Pfam" id="PF02390">
    <property type="entry name" value="Methyltransf_4"/>
    <property type="match status" value="1"/>
</dbReference>
<dbReference type="SUPFAM" id="SSF53335">
    <property type="entry name" value="S-adenosyl-L-methionine-dependent methyltransferases"/>
    <property type="match status" value="1"/>
</dbReference>
<dbReference type="PROSITE" id="PS51625">
    <property type="entry name" value="SAM_MT_TRMB"/>
    <property type="match status" value="1"/>
</dbReference>
<name>TRMB_CHLTR</name>
<protein>
    <recommendedName>
        <fullName evidence="2">tRNA (guanine-N(7)-)-methyltransferase</fullName>
        <ecNumber evidence="2">2.1.1.33</ecNumber>
    </recommendedName>
    <alternativeName>
        <fullName evidence="2">tRNA (guanine(46)-N(7))-methyltransferase</fullName>
    </alternativeName>
    <alternativeName>
        <fullName evidence="2">tRNA(m7G46)-methyltransferase</fullName>
    </alternativeName>
</protein>
<organism>
    <name type="scientific">Chlamydia trachomatis serovar D (strain ATCC VR-885 / DSM 19411 / UW-3/Cx)</name>
    <dbReference type="NCBI Taxonomy" id="272561"/>
    <lineage>
        <taxon>Bacteria</taxon>
        <taxon>Pseudomonadati</taxon>
        <taxon>Chlamydiota</taxon>
        <taxon>Chlamydiia</taxon>
        <taxon>Chlamydiales</taxon>
        <taxon>Chlamydiaceae</taxon>
        <taxon>Chlamydia/Chlamydophila group</taxon>
        <taxon>Chlamydia</taxon>
    </lineage>
</organism>
<reference key="1">
    <citation type="journal article" date="1998" name="Science">
        <title>Genome sequence of an obligate intracellular pathogen of humans: Chlamydia trachomatis.</title>
        <authorList>
            <person name="Stephens R.S."/>
            <person name="Kalman S."/>
            <person name="Lammel C.J."/>
            <person name="Fan J."/>
            <person name="Marathe R."/>
            <person name="Aravind L."/>
            <person name="Mitchell W.P."/>
            <person name="Olinger L."/>
            <person name="Tatusov R.L."/>
            <person name="Zhao Q."/>
            <person name="Koonin E.V."/>
            <person name="Davis R.W."/>
        </authorList>
    </citation>
    <scope>NUCLEOTIDE SEQUENCE [LARGE SCALE GENOMIC DNA]</scope>
    <source>
        <strain>ATCC VR-885 / DSM 19411 / UW-3/Cx</strain>
    </source>
</reference>
<keyword id="KW-0489">Methyltransferase</keyword>
<keyword id="KW-1185">Reference proteome</keyword>
<keyword id="KW-0949">S-adenosyl-L-methionine</keyword>
<keyword id="KW-0808">Transferase</keyword>
<keyword id="KW-0819">tRNA processing</keyword>
<evidence type="ECO:0000250" key="1"/>
<evidence type="ECO:0000255" key="2">
    <source>
        <dbReference type="HAMAP-Rule" id="MF_01057"/>
    </source>
</evidence>
<evidence type="ECO:0000305" key="3"/>
<proteinExistence type="inferred from homology"/>
<accession>O84836</accession>